<keyword id="KW-0167">Capsid protein</keyword>
<keyword id="KW-1185">Reference proteome</keyword>
<keyword id="KW-1140">T=1 icosahedral capsid protein</keyword>
<keyword id="KW-0946">Virion</keyword>
<name>CAPSD_TTVB1</name>
<dbReference type="EMBL" id="AB026931">
    <property type="protein sequence ID" value="BAA86951.1"/>
    <property type="molecule type" value="Genomic_DNA"/>
</dbReference>
<dbReference type="RefSeq" id="YP_003587916.1">
    <property type="nucleotide sequence ID" value="NC_014097.1"/>
</dbReference>
<dbReference type="SMR" id="Q9QU30"/>
<dbReference type="KEGG" id="vg:9086758"/>
<dbReference type="Proteomes" id="UP000008779">
    <property type="component" value="Segment"/>
</dbReference>
<dbReference type="GO" id="GO:0039615">
    <property type="term" value="C:T=1 icosahedral viral capsid"/>
    <property type="evidence" value="ECO:0007669"/>
    <property type="project" value="UniProtKB-KW"/>
</dbReference>
<dbReference type="InterPro" id="IPR004219">
    <property type="entry name" value="TTvirus_Unk"/>
</dbReference>
<dbReference type="Pfam" id="PF02956">
    <property type="entry name" value="TT_ORF1"/>
    <property type="match status" value="1"/>
</dbReference>
<protein>
    <recommendedName>
        <fullName>Capsid protein</fullName>
    </recommendedName>
</protein>
<feature type="chain" id="PRO_0000404271" description="Capsid protein">
    <location>
        <begin position="1"/>
        <end position="662"/>
    </location>
</feature>
<proteinExistence type="inferred from homology"/>
<organismHost>
    <name type="scientific">Homo sapiens</name>
    <name type="common">Human</name>
    <dbReference type="NCBI Taxonomy" id="9606"/>
</organismHost>
<evidence type="ECO:0000250" key="1"/>
<evidence type="ECO:0000305" key="2"/>
<comment type="function">
    <text evidence="1">Self-assembles to form an icosahedral capsid with a T=1 symmetry, about 30 nm in diameter, and consisting of 60 capsid proteins. The capsid encapsulates the genomic DNA. Capsid protein is involved in attachment and entry into the host cell (By similarity).</text>
</comment>
<comment type="subcellular location">
    <subcellularLocation>
        <location evidence="2">Virion</location>
    </subcellularLocation>
</comment>
<comment type="similarity">
    <text evidence="2">Belongs to the anelloviridae capsid protein family.</text>
</comment>
<reference key="1">
    <citation type="journal article" date="2000" name="Arch. Virol.">
        <title>Identification of a new human DNA virus (TTV-like mini virus, TLMV) intermediately related to TT virus and chicken anemia virus.</title>
        <authorList>
            <person name="Takahashi K."/>
            <person name="Iwasa Y."/>
            <person name="Hijikata M."/>
            <person name="Mishiro S."/>
        </authorList>
    </citation>
    <scope>NUCLEOTIDE SEQUENCE [GENOMIC DNA]</scope>
</reference>
<organism>
    <name type="scientific">Torque teno mini virus 1 (isolate TLMV-CBD279)</name>
    <dbReference type="NCBI Taxonomy" id="766183"/>
    <lineage>
        <taxon>Viruses</taxon>
        <taxon>Viruses incertae sedis</taxon>
        <taxon>Anelloviridae</taxon>
        <taxon>Betatorquevirus</taxon>
        <taxon>Betatorquevirus homini1</taxon>
    </lineage>
</organism>
<gene>
    <name type="ORF">ORF1</name>
</gene>
<sequence length="662" mass="78581">MPPFYYRRRWYSNPWRRKRLRFRRRRLRRPIRKRFRRRRWVRRRRFFRFKRKLRKIRIDQWQPETIRKCHVKGNLCLLTCGRGNINHNYILTSESYVPTSEPGGGSWSILQMTTRVLYDEYKAARNWWTKSNSLLPLTKYIRCKLKFYRSDQTDYIVTIQRTGPFEVTLESYLSTQPSRHLMNHKAFIVPKLGRGPNKETYVKKIVRPPALFQSKWYFSQDIYNTPLFILTVSSCSLDQMYAPQDQISTNISLFSLNTNVFQINNWHKQPYTTKAASTLETYLYCYHNGHEPTQELKWKDIILLGNMTNYTDGKKYNTSGTTPLDLFKTENKPYWGNVFTNLNQDQDVIIYYGTKPKQDDNWTSTAPILPITSLYVECRYNPFKDKGTGNKVYLVPTDSGLGSFLTLPTKSELIITDLPLWLITWGWIEWLKKSRPVAHIEEEYQVVIQSKYIHPQLPCYVLIDKYFRHPPEGQHYITELSETDKLHWHPKYSMQTEQLELIAETGPAAPKINNTKQIEAHLNYDFLFKWGGSPAPMETITDPAEQEKFPSPSNQLQGLQIESPGKPKQYYLYTFDEKRSELTMPAAKRLKKDFTTPTFFTDFGTKDIPLKTQEETDQISEDEEIETSLPKEDHLKQQLQRTRQYYREGIRKLLKTKKLFPL</sequence>
<accession>Q9QU30</accession>